<feature type="chain" id="PRO_0000061645" description="Cytochrome b">
    <location>
        <begin position="1"/>
        <end position="379"/>
    </location>
</feature>
<feature type="transmembrane region" description="Helical" evidence="2">
    <location>
        <begin position="33"/>
        <end position="53"/>
    </location>
</feature>
<feature type="transmembrane region" description="Helical" evidence="2">
    <location>
        <begin position="77"/>
        <end position="98"/>
    </location>
</feature>
<feature type="transmembrane region" description="Helical" evidence="2">
    <location>
        <begin position="113"/>
        <end position="133"/>
    </location>
</feature>
<feature type="transmembrane region" description="Helical" evidence="2">
    <location>
        <begin position="178"/>
        <end position="198"/>
    </location>
</feature>
<feature type="transmembrane region" description="Helical" evidence="2">
    <location>
        <begin position="226"/>
        <end position="246"/>
    </location>
</feature>
<feature type="transmembrane region" description="Helical" evidence="2">
    <location>
        <begin position="288"/>
        <end position="308"/>
    </location>
</feature>
<feature type="transmembrane region" description="Helical" evidence="2">
    <location>
        <begin position="320"/>
        <end position="340"/>
    </location>
</feature>
<feature type="transmembrane region" description="Helical" evidence="2">
    <location>
        <begin position="347"/>
        <end position="367"/>
    </location>
</feature>
<feature type="binding site" description="axial binding residue" evidence="2">
    <location>
        <position position="83"/>
    </location>
    <ligand>
        <name>heme b</name>
        <dbReference type="ChEBI" id="CHEBI:60344"/>
        <label>b562</label>
    </ligand>
    <ligandPart>
        <name>Fe</name>
        <dbReference type="ChEBI" id="CHEBI:18248"/>
    </ligandPart>
</feature>
<feature type="binding site" description="axial binding residue" evidence="2">
    <location>
        <position position="97"/>
    </location>
    <ligand>
        <name>heme b</name>
        <dbReference type="ChEBI" id="CHEBI:60344"/>
        <label>b566</label>
    </ligand>
    <ligandPart>
        <name>Fe</name>
        <dbReference type="ChEBI" id="CHEBI:18248"/>
    </ligandPart>
</feature>
<feature type="binding site" description="axial binding residue" evidence="2">
    <location>
        <position position="182"/>
    </location>
    <ligand>
        <name>heme b</name>
        <dbReference type="ChEBI" id="CHEBI:60344"/>
        <label>b562</label>
    </ligand>
    <ligandPart>
        <name>Fe</name>
        <dbReference type="ChEBI" id="CHEBI:18248"/>
    </ligandPart>
</feature>
<feature type="binding site" description="axial binding residue" evidence="2">
    <location>
        <position position="196"/>
    </location>
    <ligand>
        <name>heme b</name>
        <dbReference type="ChEBI" id="CHEBI:60344"/>
        <label>b566</label>
    </ligand>
    <ligandPart>
        <name>Fe</name>
        <dbReference type="ChEBI" id="CHEBI:18248"/>
    </ligandPart>
</feature>
<feature type="binding site" evidence="2">
    <location>
        <position position="201"/>
    </location>
    <ligand>
        <name>a ubiquinone</name>
        <dbReference type="ChEBI" id="CHEBI:16389"/>
    </ligand>
</feature>
<accession>O47488</accession>
<comment type="function">
    <text evidence="2">Component of the ubiquinol-cytochrome c reductase complex (complex III or cytochrome b-c1 complex) that is part of the mitochondrial respiratory chain. The b-c1 complex mediates electron transfer from ubiquinol to cytochrome c. Contributes to the generation of a proton gradient across the mitochondrial membrane that is then used for ATP synthesis.</text>
</comment>
<comment type="cofactor">
    <cofactor evidence="2">
        <name>heme b</name>
        <dbReference type="ChEBI" id="CHEBI:60344"/>
    </cofactor>
    <text evidence="2">Binds 2 heme b groups non-covalently.</text>
</comment>
<comment type="subunit">
    <text evidence="2">The cytochrome bc1 complex contains 11 subunits: 3 respiratory subunits (MT-CYB, CYC1 and UQCRFS1), 2 core proteins (UQCRC1 and UQCRC2) and 6 low-molecular weight proteins (UQCRH/QCR6, UQCRB/QCR7, UQCRQ/QCR8, UQCR10/QCR9, UQCR11/QCR10 and a cleavage product of UQCRFS1). This cytochrome bc1 complex then forms a dimer.</text>
</comment>
<comment type="subcellular location">
    <subcellularLocation>
        <location evidence="2">Mitochondrion inner membrane</location>
        <topology evidence="2">Multi-pass membrane protein</topology>
    </subcellularLocation>
</comment>
<comment type="miscellaneous">
    <text evidence="1">Heme 1 (or BL or b562) is low-potential and absorbs at about 562 nm, and heme 2 (or BH or b566) is high-potential and absorbs at about 566 nm.</text>
</comment>
<comment type="similarity">
    <text evidence="3 4">Belongs to the cytochrome b family.</text>
</comment>
<comment type="caution">
    <text evidence="2">The full-length protein contains only eight transmembrane helices, not nine as predicted by bioinformatics tools.</text>
</comment>
<reference key="1">
    <citation type="journal article" date="1998" name="J. Mol. Evol.">
        <title>Accelerated evolution of cytochrome b in simian primates: adaptive evolution in concert with other mitochondrial proteins?</title>
        <authorList>
            <person name="Andrews T.D."/>
            <person name="Jermiin L.S."/>
            <person name="Easteal S."/>
        </authorList>
    </citation>
    <scope>NUCLEOTIDE SEQUENCE [GENOMIC DNA]</scope>
</reference>
<evidence type="ECO:0000250" key="1"/>
<evidence type="ECO:0000250" key="2">
    <source>
        <dbReference type="UniProtKB" id="P00157"/>
    </source>
</evidence>
<evidence type="ECO:0000255" key="3">
    <source>
        <dbReference type="PROSITE-ProRule" id="PRU00967"/>
    </source>
</evidence>
<evidence type="ECO:0000255" key="4">
    <source>
        <dbReference type="PROSITE-ProRule" id="PRU00968"/>
    </source>
</evidence>
<organism>
    <name type="scientific">Cephalopachus bancanus</name>
    <name type="common">Western tarsier</name>
    <name type="synonym">Tarsius bancanus</name>
    <dbReference type="NCBI Taxonomy" id="9477"/>
    <lineage>
        <taxon>Eukaryota</taxon>
        <taxon>Metazoa</taxon>
        <taxon>Chordata</taxon>
        <taxon>Craniata</taxon>
        <taxon>Vertebrata</taxon>
        <taxon>Euteleostomi</taxon>
        <taxon>Mammalia</taxon>
        <taxon>Eutheria</taxon>
        <taxon>Euarchontoglires</taxon>
        <taxon>Primates</taxon>
        <taxon>Haplorrhini</taxon>
        <taxon>Tarsiiformes</taxon>
        <taxon>Tarsiidae</taxon>
        <taxon>Cephalopachus</taxon>
    </lineage>
</organism>
<geneLocation type="mitochondrion"/>
<protein>
    <recommendedName>
        <fullName>Cytochrome b</fullName>
    </recommendedName>
    <alternativeName>
        <fullName>Complex III subunit 3</fullName>
    </alternativeName>
    <alternativeName>
        <fullName>Complex III subunit III</fullName>
    </alternativeName>
    <alternativeName>
        <fullName>Cytochrome b-c1 complex subunit 3</fullName>
    </alternativeName>
    <alternativeName>
        <fullName>Ubiquinol-cytochrome-c reductase complex cytochrome b subunit</fullName>
    </alternativeName>
</protein>
<keyword id="KW-0249">Electron transport</keyword>
<keyword id="KW-0349">Heme</keyword>
<keyword id="KW-0408">Iron</keyword>
<keyword id="KW-0472">Membrane</keyword>
<keyword id="KW-0479">Metal-binding</keyword>
<keyword id="KW-0496">Mitochondrion</keyword>
<keyword id="KW-0999">Mitochondrion inner membrane</keyword>
<keyword id="KW-0679">Respiratory chain</keyword>
<keyword id="KW-0812">Transmembrane</keyword>
<keyword id="KW-1133">Transmembrane helix</keyword>
<keyword id="KW-0813">Transport</keyword>
<keyword id="KW-0830">Ubiquinone</keyword>
<gene>
    <name type="primary">MT-CYB</name>
    <name type="synonym">COB</name>
    <name type="synonym">CYTB</name>
    <name type="synonym">MTCYB</name>
</gene>
<sequence>MTNLRKTHPLMKIINHSFIDLPAPSNISAWWNFGSLLGVCLGLQIVTGLFLAMHYTSDTMTAFSSVTHICRDVNYGWLIRYLHANGASMFFMCLFMHVGRGLYYGSYTFLETWNIGILLLFTVMATAFMGYVLPWGQMSFWGATVITNLLSAIPYIGINLVEWIWGGFSVDKATLTRFFAFHFILPFMVTALVMVHLLFLHETGSNNPSGISSDTDKIPFHPYFTIKDILGLAILMLFLMTLVLFMADLLGDPDNYTPANPPKTPPHIKPEWYFLFAYAILRSIPNKLGGVLALMLSILILAIIPMLHTSKQRSMSFRPLSQCLFWMLVANLLTLTWIGGQPVQHPFIIIGQTASILYFLNILILMPLTNIIENKMIKW</sequence>
<dbReference type="EMBL" id="AB011077">
    <property type="protein sequence ID" value="BAA24924.1"/>
    <property type="molecule type" value="Genomic_DNA"/>
</dbReference>
<dbReference type="SMR" id="O47488"/>
<dbReference type="GO" id="GO:0005743">
    <property type="term" value="C:mitochondrial inner membrane"/>
    <property type="evidence" value="ECO:0007669"/>
    <property type="project" value="UniProtKB-SubCell"/>
</dbReference>
<dbReference type="GO" id="GO:0045275">
    <property type="term" value="C:respiratory chain complex III"/>
    <property type="evidence" value="ECO:0007669"/>
    <property type="project" value="InterPro"/>
</dbReference>
<dbReference type="GO" id="GO:0046872">
    <property type="term" value="F:metal ion binding"/>
    <property type="evidence" value="ECO:0007669"/>
    <property type="project" value="UniProtKB-KW"/>
</dbReference>
<dbReference type="GO" id="GO:0008121">
    <property type="term" value="F:ubiquinol-cytochrome-c reductase activity"/>
    <property type="evidence" value="ECO:0007669"/>
    <property type="project" value="InterPro"/>
</dbReference>
<dbReference type="GO" id="GO:0006122">
    <property type="term" value="P:mitochondrial electron transport, ubiquinol to cytochrome c"/>
    <property type="evidence" value="ECO:0007669"/>
    <property type="project" value="TreeGrafter"/>
</dbReference>
<dbReference type="CDD" id="cd00290">
    <property type="entry name" value="cytochrome_b_C"/>
    <property type="match status" value="1"/>
</dbReference>
<dbReference type="CDD" id="cd00284">
    <property type="entry name" value="Cytochrome_b_N"/>
    <property type="match status" value="1"/>
</dbReference>
<dbReference type="FunFam" id="1.20.810.10:FF:000002">
    <property type="entry name" value="Cytochrome b"/>
    <property type="match status" value="1"/>
</dbReference>
<dbReference type="Gene3D" id="1.20.810.10">
    <property type="entry name" value="Cytochrome Bc1 Complex, Chain C"/>
    <property type="match status" value="1"/>
</dbReference>
<dbReference type="InterPro" id="IPR005798">
    <property type="entry name" value="Cyt_b/b6_C"/>
</dbReference>
<dbReference type="InterPro" id="IPR036150">
    <property type="entry name" value="Cyt_b/b6_C_sf"/>
</dbReference>
<dbReference type="InterPro" id="IPR005797">
    <property type="entry name" value="Cyt_b/b6_N"/>
</dbReference>
<dbReference type="InterPro" id="IPR027387">
    <property type="entry name" value="Cytb/b6-like_sf"/>
</dbReference>
<dbReference type="InterPro" id="IPR030689">
    <property type="entry name" value="Cytochrome_b"/>
</dbReference>
<dbReference type="InterPro" id="IPR048260">
    <property type="entry name" value="Cytochrome_b_C_euk/bac"/>
</dbReference>
<dbReference type="InterPro" id="IPR048259">
    <property type="entry name" value="Cytochrome_b_N_euk/bac"/>
</dbReference>
<dbReference type="InterPro" id="IPR016174">
    <property type="entry name" value="Di-haem_cyt_TM"/>
</dbReference>
<dbReference type="PANTHER" id="PTHR19271">
    <property type="entry name" value="CYTOCHROME B"/>
    <property type="match status" value="1"/>
</dbReference>
<dbReference type="PANTHER" id="PTHR19271:SF16">
    <property type="entry name" value="CYTOCHROME B"/>
    <property type="match status" value="1"/>
</dbReference>
<dbReference type="Pfam" id="PF00032">
    <property type="entry name" value="Cytochrom_B_C"/>
    <property type="match status" value="1"/>
</dbReference>
<dbReference type="Pfam" id="PF00033">
    <property type="entry name" value="Cytochrome_B"/>
    <property type="match status" value="1"/>
</dbReference>
<dbReference type="PIRSF" id="PIRSF038885">
    <property type="entry name" value="COB"/>
    <property type="match status" value="1"/>
</dbReference>
<dbReference type="SUPFAM" id="SSF81648">
    <property type="entry name" value="a domain/subunit of cytochrome bc1 complex (Ubiquinol-cytochrome c reductase)"/>
    <property type="match status" value="1"/>
</dbReference>
<dbReference type="SUPFAM" id="SSF81342">
    <property type="entry name" value="Transmembrane di-heme cytochromes"/>
    <property type="match status" value="1"/>
</dbReference>
<dbReference type="PROSITE" id="PS51003">
    <property type="entry name" value="CYTB_CTER"/>
    <property type="match status" value="1"/>
</dbReference>
<dbReference type="PROSITE" id="PS51002">
    <property type="entry name" value="CYTB_NTER"/>
    <property type="match status" value="1"/>
</dbReference>
<proteinExistence type="inferred from homology"/>
<name>CYB_CEPBA</name>